<sequence length="135" mass="15298">MINTKPPEIYALGQHISMSADKARRIIDRIRGRSYEETLLILELMPYRAAYPIFKLVYSAASNASYTLASNEANLVIIKAEVNEGPAIKKLKPRARGRCYPIKRPTCHITIVLKDISFYDSDSESVELNLLKKAR</sequence>
<keyword id="KW-0934">Plastid</keyword>
<keyword id="KW-0687">Ribonucleoprotein</keyword>
<keyword id="KW-0689">Ribosomal protein</keyword>
<keyword id="KW-0694">RNA-binding</keyword>
<keyword id="KW-0699">rRNA-binding</keyword>
<reference key="1">
    <citation type="journal article" date="2007" name="BMC Plant Biol.">
        <title>Complete plastid genome sequences suggest strong selection for retention of photosynthetic genes in the parasitic plant genus Cuscuta.</title>
        <authorList>
            <person name="McNeal J.R."/>
            <person name="Kuehl J.V."/>
            <person name="Boore J.L."/>
            <person name="dePamphilis C.W."/>
        </authorList>
    </citation>
    <scope>NUCLEOTIDE SEQUENCE [LARGE SCALE GENOMIC DNA]</scope>
</reference>
<proteinExistence type="inferred from homology"/>
<comment type="function">
    <text evidence="1">This protein binds specifically to 23S rRNA.</text>
</comment>
<comment type="function">
    <text evidence="1">The globular domain of the protein is located near the polypeptide exit tunnel on the outside of the subunit, while an extended beta-hairpin is found that lines the wall of the exit tunnel in the center of the 70S ribosome.</text>
</comment>
<comment type="subunit">
    <text evidence="1">Part of the 50S ribosomal subunit.</text>
</comment>
<comment type="subcellular location">
    <subcellularLocation>
        <location>Plastid</location>
    </subcellularLocation>
</comment>
<comment type="similarity">
    <text evidence="2">Belongs to the universal ribosomal protein uL22 family.</text>
</comment>
<comment type="caution">
    <text evidence="2">Young tissue from this organism is photosynthetic and contains some thylakoids, although the photosynthetic activity does not exceed the light compensation point.</text>
</comment>
<comment type="sequence caution" evidence="2">
    <conflict type="erroneous initiation">
        <sequence resource="EMBL-CDS" id="ABW83731"/>
    </conflict>
</comment>
<feature type="chain" id="PRO_0000354567" description="Large ribosomal subunit protein uL22c">
    <location>
        <begin position="1"/>
        <end position="135"/>
    </location>
</feature>
<evidence type="ECO:0000250" key="1"/>
<evidence type="ECO:0000305" key="2"/>
<accession>A8W3G0</accession>
<protein>
    <recommendedName>
        <fullName evidence="2">Large ribosomal subunit protein uL22c</fullName>
    </recommendedName>
    <alternativeName>
        <fullName>50S ribosomal protein L22, plastid</fullName>
    </alternativeName>
</protein>
<dbReference type="EMBL" id="EU189132">
    <property type="protein sequence ID" value="ABW83731.1"/>
    <property type="status" value="ALT_INIT"/>
    <property type="molecule type" value="Genomic_DNA"/>
</dbReference>
<dbReference type="RefSeq" id="YP_001542567.1">
    <property type="nucleotide sequence ID" value="NC_009963.1"/>
</dbReference>
<dbReference type="SMR" id="A8W3G0"/>
<dbReference type="GeneID" id="5729609"/>
<dbReference type="GO" id="GO:0015934">
    <property type="term" value="C:large ribosomal subunit"/>
    <property type="evidence" value="ECO:0007669"/>
    <property type="project" value="InterPro"/>
</dbReference>
<dbReference type="GO" id="GO:0009536">
    <property type="term" value="C:plastid"/>
    <property type="evidence" value="ECO:0007669"/>
    <property type="project" value="UniProtKB-SubCell"/>
</dbReference>
<dbReference type="GO" id="GO:0019843">
    <property type="term" value="F:rRNA binding"/>
    <property type="evidence" value="ECO:0007669"/>
    <property type="project" value="UniProtKB-KW"/>
</dbReference>
<dbReference type="GO" id="GO:0003735">
    <property type="term" value="F:structural constituent of ribosome"/>
    <property type="evidence" value="ECO:0007669"/>
    <property type="project" value="InterPro"/>
</dbReference>
<dbReference type="GO" id="GO:0006412">
    <property type="term" value="P:translation"/>
    <property type="evidence" value="ECO:0007669"/>
    <property type="project" value="InterPro"/>
</dbReference>
<dbReference type="CDD" id="cd00336">
    <property type="entry name" value="Ribosomal_L22"/>
    <property type="match status" value="1"/>
</dbReference>
<dbReference type="FunFam" id="3.90.470.10:FF:000006">
    <property type="entry name" value="50S ribosomal protein L22, chloroplastic"/>
    <property type="match status" value="1"/>
</dbReference>
<dbReference type="Gene3D" id="3.90.470.10">
    <property type="entry name" value="Ribosomal protein L22/L17"/>
    <property type="match status" value="1"/>
</dbReference>
<dbReference type="HAMAP" id="MF_01331_B">
    <property type="entry name" value="Ribosomal_uL22_B"/>
    <property type="match status" value="1"/>
</dbReference>
<dbReference type="InterPro" id="IPR001063">
    <property type="entry name" value="Ribosomal_uL22"/>
</dbReference>
<dbReference type="InterPro" id="IPR005727">
    <property type="entry name" value="Ribosomal_uL22_bac/chlpt-type"/>
</dbReference>
<dbReference type="InterPro" id="IPR047867">
    <property type="entry name" value="Ribosomal_uL22_bac/org-type"/>
</dbReference>
<dbReference type="InterPro" id="IPR018260">
    <property type="entry name" value="Ribosomal_uL22_CS"/>
</dbReference>
<dbReference type="InterPro" id="IPR036394">
    <property type="entry name" value="Ribosomal_uL22_sf"/>
</dbReference>
<dbReference type="NCBIfam" id="TIGR01044">
    <property type="entry name" value="rplV_bact"/>
    <property type="match status" value="1"/>
</dbReference>
<dbReference type="PANTHER" id="PTHR13501">
    <property type="entry name" value="CHLOROPLAST 50S RIBOSOMAL PROTEIN L22-RELATED"/>
    <property type="match status" value="1"/>
</dbReference>
<dbReference type="PANTHER" id="PTHR13501:SF10">
    <property type="entry name" value="LARGE RIBOSOMAL SUBUNIT PROTEIN UL22M"/>
    <property type="match status" value="1"/>
</dbReference>
<dbReference type="Pfam" id="PF00237">
    <property type="entry name" value="Ribosomal_L22"/>
    <property type="match status" value="1"/>
</dbReference>
<dbReference type="SUPFAM" id="SSF54843">
    <property type="entry name" value="Ribosomal protein L22"/>
    <property type="match status" value="1"/>
</dbReference>
<dbReference type="PROSITE" id="PS00464">
    <property type="entry name" value="RIBOSOMAL_L22"/>
    <property type="match status" value="1"/>
</dbReference>
<gene>
    <name type="primary">rpl22</name>
</gene>
<geneLocation type="plastid"/>
<name>RK22_CUSEX</name>
<organism>
    <name type="scientific">Cuscuta exaltata</name>
    <name type="common">Tall dodder</name>
    <dbReference type="NCBI Taxonomy" id="476139"/>
    <lineage>
        <taxon>Eukaryota</taxon>
        <taxon>Viridiplantae</taxon>
        <taxon>Streptophyta</taxon>
        <taxon>Embryophyta</taxon>
        <taxon>Tracheophyta</taxon>
        <taxon>Spermatophyta</taxon>
        <taxon>Magnoliopsida</taxon>
        <taxon>eudicotyledons</taxon>
        <taxon>Gunneridae</taxon>
        <taxon>Pentapetalae</taxon>
        <taxon>asterids</taxon>
        <taxon>lamiids</taxon>
        <taxon>Solanales</taxon>
        <taxon>Convolvulaceae</taxon>
        <taxon>Cuscuteae</taxon>
        <taxon>Cuscuta</taxon>
        <taxon>Cuscuta subgen. Monogynella</taxon>
    </lineage>
</organism>